<feature type="chain" id="PRO_1000087364" description="2,3-bisphosphoglycerate-independent phosphoglycerate mutase">
    <location>
        <begin position="1"/>
        <end position="406"/>
    </location>
</feature>
<proteinExistence type="inferred from homology"/>
<comment type="function">
    <text evidence="1">Catalyzes the interconversion of 2-phosphoglycerate and 3-phosphoglycerate.</text>
</comment>
<comment type="catalytic activity">
    <reaction evidence="1">
        <text>(2R)-2-phosphoglycerate = (2R)-3-phosphoglycerate</text>
        <dbReference type="Rhea" id="RHEA:15901"/>
        <dbReference type="ChEBI" id="CHEBI:58272"/>
        <dbReference type="ChEBI" id="CHEBI:58289"/>
        <dbReference type="EC" id="5.4.2.12"/>
    </reaction>
</comment>
<comment type="pathway">
    <text evidence="1">Carbohydrate degradation; glycolysis; pyruvate from D-glyceraldehyde 3-phosphate: step 3/5.</text>
</comment>
<comment type="similarity">
    <text evidence="1">Belongs to the BPG-independent phosphoglycerate mutase family. A-PGAM subfamily.</text>
</comment>
<organism>
    <name type="scientific">Methanococcus maripaludis (strain C7 / ATCC BAA-1331)</name>
    <dbReference type="NCBI Taxonomy" id="426368"/>
    <lineage>
        <taxon>Archaea</taxon>
        <taxon>Methanobacteriati</taxon>
        <taxon>Methanobacteriota</taxon>
        <taxon>Methanomada group</taxon>
        <taxon>Methanococci</taxon>
        <taxon>Methanococcales</taxon>
        <taxon>Methanococcaceae</taxon>
        <taxon>Methanococcus</taxon>
    </lineage>
</organism>
<dbReference type="EC" id="5.4.2.12" evidence="1"/>
<dbReference type="EMBL" id="CP000745">
    <property type="protein sequence ID" value="ABR65751.1"/>
    <property type="molecule type" value="Genomic_DNA"/>
</dbReference>
<dbReference type="SMR" id="A6VH25"/>
<dbReference type="STRING" id="426368.MmarC7_0684"/>
<dbReference type="KEGG" id="mmz:MmarC7_0684"/>
<dbReference type="eggNOG" id="arCOG01696">
    <property type="taxonomic scope" value="Archaea"/>
</dbReference>
<dbReference type="HOGENOM" id="CLU_034906_2_0_2"/>
<dbReference type="OrthoDB" id="52918at2157"/>
<dbReference type="UniPathway" id="UPA00109">
    <property type="reaction ID" value="UER00186"/>
</dbReference>
<dbReference type="GO" id="GO:0046872">
    <property type="term" value="F:metal ion binding"/>
    <property type="evidence" value="ECO:0007669"/>
    <property type="project" value="InterPro"/>
</dbReference>
<dbReference type="GO" id="GO:0004619">
    <property type="term" value="F:phosphoglycerate mutase activity"/>
    <property type="evidence" value="ECO:0007669"/>
    <property type="project" value="UniProtKB-EC"/>
</dbReference>
<dbReference type="GO" id="GO:0006096">
    <property type="term" value="P:glycolytic process"/>
    <property type="evidence" value="ECO:0007669"/>
    <property type="project" value="UniProtKB-UniRule"/>
</dbReference>
<dbReference type="CDD" id="cd16011">
    <property type="entry name" value="iPGM_like"/>
    <property type="match status" value="1"/>
</dbReference>
<dbReference type="Gene3D" id="3.40.720.10">
    <property type="entry name" value="Alkaline Phosphatase, subunit A"/>
    <property type="match status" value="2"/>
</dbReference>
<dbReference type="HAMAP" id="MF_01402_A">
    <property type="entry name" value="ApgM_A"/>
    <property type="match status" value="1"/>
</dbReference>
<dbReference type="InterPro" id="IPR017850">
    <property type="entry name" value="Alkaline_phosphatase_core_sf"/>
</dbReference>
<dbReference type="InterPro" id="IPR023665">
    <property type="entry name" value="ApgAM_prokaryotes"/>
</dbReference>
<dbReference type="InterPro" id="IPR006124">
    <property type="entry name" value="Metalloenzyme"/>
</dbReference>
<dbReference type="InterPro" id="IPR004456">
    <property type="entry name" value="Pglycerate_mutase_ApgM"/>
</dbReference>
<dbReference type="NCBIfam" id="TIGR00306">
    <property type="entry name" value="apgM"/>
    <property type="match status" value="1"/>
</dbReference>
<dbReference type="NCBIfam" id="NF003104">
    <property type="entry name" value="PRK04024.1"/>
    <property type="match status" value="1"/>
</dbReference>
<dbReference type="PANTHER" id="PTHR31209">
    <property type="entry name" value="COFACTOR-INDEPENDENT PHOSPHOGLYCERATE MUTASE"/>
    <property type="match status" value="1"/>
</dbReference>
<dbReference type="PANTHER" id="PTHR31209:SF0">
    <property type="entry name" value="METALLOENZYME DOMAIN-CONTAINING PROTEIN"/>
    <property type="match status" value="1"/>
</dbReference>
<dbReference type="Pfam" id="PF01676">
    <property type="entry name" value="Metalloenzyme"/>
    <property type="match status" value="1"/>
</dbReference>
<dbReference type="Pfam" id="PF10143">
    <property type="entry name" value="PhosphMutase"/>
    <property type="match status" value="1"/>
</dbReference>
<dbReference type="PIRSF" id="PIRSF006392">
    <property type="entry name" value="IPGAM_arch"/>
    <property type="match status" value="1"/>
</dbReference>
<dbReference type="SUPFAM" id="SSF53649">
    <property type="entry name" value="Alkaline phosphatase-like"/>
    <property type="match status" value="1"/>
</dbReference>
<accession>A6VH25</accession>
<name>APGM_METM7</name>
<gene>
    <name evidence="1" type="primary">apgM</name>
    <name type="ordered locus">MmarC7_0684</name>
</gene>
<sequence length="406" mass="44527">MKAVIFIMDGLGDRPNKDGNTPLKEAKTPIMDKMAKDGICGLMNAVDVGVRPGSDTAHLAILGYDPYTTYTGRGPFEACGVGVTVKPGDIAFRCNFSSVDENFIVTDRRAGRIENTSELEKELDGLKIDDVEIIFKESGGYRAALVLRGPGLSDRISDADPKKEGKRVKEIHPLDDSKEAKKTAEIVNRLLKIAYEKLDKHPVNEERRKQNLPVANMIVPRGVGQVPEIMPFTEKTGLKGACIAGTGLIKGIAKMVGLDVIDVEGCDGTPNSDLMAKACAIVETLKNYDFILVNVKGADEAGHDGNYELKKEIIERIDEMLDYITKNISKDEVYFVISGDHSTPIEEMDHSADPLPIVIWGKSVRVDDVEKFDEFSTHKGGLNWIKGTNIMPILMDLMSIAKKYGA</sequence>
<reference key="1">
    <citation type="submission" date="2007-06" db="EMBL/GenBank/DDBJ databases">
        <title>Complete sequence of Methanococcus maripaludis C7.</title>
        <authorList>
            <consortium name="US DOE Joint Genome Institute"/>
            <person name="Copeland A."/>
            <person name="Lucas S."/>
            <person name="Lapidus A."/>
            <person name="Barry K."/>
            <person name="Glavina del Rio T."/>
            <person name="Dalin E."/>
            <person name="Tice H."/>
            <person name="Pitluck S."/>
            <person name="Clum A."/>
            <person name="Schmutz J."/>
            <person name="Larimer F."/>
            <person name="Land M."/>
            <person name="Hauser L."/>
            <person name="Kyrpides N."/>
            <person name="Anderson I."/>
            <person name="Sieprawska-Lupa M."/>
            <person name="Whitman W.B."/>
            <person name="Richardson P."/>
        </authorList>
    </citation>
    <scope>NUCLEOTIDE SEQUENCE [LARGE SCALE GENOMIC DNA]</scope>
    <source>
        <strain>C7 / ATCC BAA-1331</strain>
    </source>
</reference>
<evidence type="ECO:0000255" key="1">
    <source>
        <dbReference type="HAMAP-Rule" id="MF_01402"/>
    </source>
</evidence>
<keyword id="KW-0324">Glycolysis</keyword>
<keyword id="KW-0413">Isomerase</keyword>
<protein>
    <recommendedName>
        <fullName evidence="1">2,3-bisphosphoglycerate-independent phosphoglycerate mutase</fullName>
        <shortName evidence="1">BPG-independent PGAM</shortName>
        <shortName evidence="1">Phosphoglyceromutase</shortName>
        <shortName evidence="1">aPGAM</shortName>
        <ecNumber evidence="1">5.4.2.12</ecNumber>
    </recommendedName>
</protein>